<organism>
    <name type="scientific">Nitratiruptor sp. (strain SB155-2)</name>
    <dbReference type="NCBI Taxonomy" id="387092"/>
    <lineage>
        <taxon>Bacteria</taxon>
        <taxon>Pseudomonadati</taxon>
        <taxon>Campylobacterota</taxon>
        <taxon>Epsilonproteobacteria</taxon>
        <taxon>Nautiliales</taxon>
        <taxon>Nitratiruptoraceae</taxon>
        <taxon>Nitratiruptor</taxon>
    </lineage>
</organism>
<sequence length="406" mass="46679">MAIKALRGMKDILPPLSEKYLNFLQTASHYAHNYGFSYIETPLLEETALFKRSVGESSDIVGKEMYQFIDKGGNDIVLRPEGTAGVVRSFIEHKLDRQGGTHRFFYYGSMFRYERPQKGRFRQFHQFGVESFGEPSVYEDAAIITLAKAILDHFEIDYTLKINSLGCPVCLKPYREELIKFLEDQEHICDDCKRRRKLNPIRVLDCKNEQCQQIYENAPKLINNLCEECNQEFQTLKNLLDNEGIIYEVDENLVRGLDYYTRTAFEFVSNALGAQNAVAGGGRYDNLVEMLGGKPTPAVGFAIGIERILDLIKDKPVQREGYFIGVMLPEALNIAFDIATKLRQSNRVIMEYKPKSLKALLKGADRNNAKYALIIGEDEYNEGLVWIKDLERKEEKRVDIQNFMER</sequence>
<gene>
    <name evidence="1" type="primary">hisS</name>
    <name type="ordered locus">NIS_0818</name>
</gene>
<dbReference type="EC" id="6.1.1.21" evidence="1"/>
<dbReference type="EMBL" id="AP009178">
    <property type="protein sequence ID" value="BAF69930.1"/>
    <property type="molecule type" value="Genomic_DNA"/>
</dbReference>
<dbReference type="RefSeq" id="WP_012082193.1">
    <property type="nucleotide sequence ID" value="NC_009662.1"/>
</dbReference>
<dbReference type="SMR" id="A6Q371"/>
<dbReference type="FunCoup" id="A6Q371">
    <property type="interactions" value="426"/>
</dbReference>
<dbReference type="STRING" id="387092.NIS_0818"/>
<dbReference type="KEGG" id="nis:NIS_0818"/>
<dbReference type="eggNOG" id="COG0124">
    <property type="taxonomic scope" value="Bacteria"/>
</dbReference>
<dbReference type="HOGENOM" id="CLU_025113_1_1_7"/>
<dbReference type="InParanoid" id="A6Q371"/>
<dbReference type="OrthoDB" id="9800814at2"/>
<dbReference type="Proteomes" id="UP000001118">
    <property type="component" value="Chromosome"/>
</dbReference>
<dbReference type="GO" id="GO:0005737">
    <property type="term" value="C:cytoplasm"/>
    <property type="evidence" value="ECO:0007669"/>
    <property type="project" value="UniProtKB-SubCell"/>
</dbReference>
<dbReference type="GO" id="GO:0005524">
    <property type="term" value="F:ATP binding"/>
    <property type="evidence" value="ECO:0007669"/>
    <property type="project" value="UniProtKB-UniRule"/>
</dbReference>
<dbReference type="GO" id="GO:0004821">
    <property type="term" value="F:histidine-tRNA ligase activity"/>
    <property type="evidence" value="ECO:0007669"/>
    <property type="project" value="UniProtKB-UniRule"/>
</dbReference>
<dbReference type="GO" id="GO:0006427">
    <property type="term" value="P:histidyl-tRNA aminoacylation"/>
    <property type="evidence" value="ECO:0007669"/>
    <property type="project" value="UniProtKB-UniRule"/>
</dbReference>
<dbReference type="CDD" id="cd00773">
    <property type="entry name" value="HisRS-like_core"/>
    <property type="match status" value="1"/>
</dbReference>
<dbReference type="Gene3D" id="3.40.50.800">
    <property type="entry name" value="Anticodon-binding domain"/>
    <property type="match status" value="1"/>
</dbReference>
<dbReference type="Gene3D" id="3.30.930.10">
    <property type="entry name" value="Bira Bifunctional Protein, Domain 2"/>
    <property type="match status" value="1"/>
</dbReference>
<dbReference type="HAMAP" id="MF_00127">
    <property type="entry name" value="His_tRNA_synth"/>
    <property type="match status" value="1"/>
</dbReference>
<dbReference type="InterPro" id="IPR006195">
    <property type="entry name" value="aa-tRNA-synth_II"/>
</dbReference>
<dbReference type="InterPro" id="IPR045864">
    <property type="entry name" value="aa-tRNA-synth_II/BPL/LPL"/>
</dbReference>
<dbReference type="InterPro" id="IPR004154">
    <property type="entry name" value="Anticodon-bd"/>
</dbReference>
<dbReference type="InterPro" id="IPR036621">
    <property type="entry name" value="Anticodon-bd_dom_sf"/>
</dbReference>
<dbReference type="InterPro" id="IPR015807">
    <property type="entry name" value="His-tRNA-ligase"/>
</dbReference>
<dbReference type="InterPro" id="IPR041715">
    <property type="entry name" value="HisRS-like_core"/>
</dbReference>
<dbReference type="InterPro" id="IPR004516">
    <property type="entry name" value="HisRS/HisZ"/>
</dbReference>
<dbReference type="NCBIfam" id="TIGR00442">
    <property type="entry name" value="hisS"/>
    <property type="match status" value="1"/>
</dbReference>
<dbReference type="PANTHER" id="PTHR43707:SF1">
    <property type="entry name" value="HISTIDINE--TRNA LIGASE, MITOCHONDRIAL-RELATED"/>
    <property type="match status" value="1"/>
</dbReference>
<dbReference type="PANTHER" id="PTHR43707">
    <property type="entry name" value="HISTIDYL-TRNA SYNTHETASE"/>
    <property type="match status" value="1"/>
</dbReference>
<dbReference type="Pfam" id="PF03129">
    <property type="entry name" value="HGTP_anticodon"/>
    <property type="match status" value="1"/>
</dbReference>
<dbReference type="Pfam" id="PF13393">
    <property type="entry name" value="tRNA-synt_His"/>
    <property type="match status" value="1"/>
</dbReference>
<dbReference type="PIRSF" id="PIRSF001549">
    <property type="entry name" value="His-tRNA_synth"/>
    <property type="match status" value="1"/>
</dbReference>
<dbReference type="SUPFAM" id="SSF52954">
    <property type="entry name" value="Class II aaRS ABD-related"/>
    <property type="match status" value="1"/>
</dbReference>
<dbReference type="SUPFAM" id="SSF55681">
    <property type="entry name" value="Class II aaRS and biotin synthetases"/>
    <property type="match status" value="1"/>
</dbReference>
<dbReference type="PROSITE" id="PS50862">
    <property type="entry name" value="AA_TRNA_LIGASE_II"/>
    <property type="match status" value="1"/>
</dbReference>
<proteinExistence type="inferred from homology"/>
<reference key="1">
    <citation type="journal article" date="2007" name="Proc. Natl. Acad. Sci. U.S.A.">
        <title>Deep-sea vent epsilon-proteobacterial genomes provide insights into emergence of pathogens.</title>
        <authorList>
            <person name="Nakagawa S."/>
            <person name="Takaki Y."/>
            <person name="Shimamura S."/>
            <person name="Reysenbach A.-L."/>
            <person name="Takai K."/>
            <person name="Horikoshi K."/>
        </authorList>
    </citation>
    <scope>NUCLEOTIDE SEQUENCE [LARGE SCALE GENOMIC DNA]</scope>
    <source>
        <strain>SB155-2</strain>
    </source>
</reference>
<comment type="catalytic activity">
    <reaction evidence="1">
        <text>tRNA(His) + L-histidine + ATP = L-histidyl-tRNA(His) + AMP + diphosphate + H(+)</text>
        <dbReference type="Rhea" id="RHEA:17313"/>
        <dbReference type="Rhea" id="RHEA-COMP:9665"/>
        <dbReference type="Rhea" id="RHEA-COMP:9689"/>
        <dbReference type="ChEBI" id="CHEBI:15378"/>
        <dbReference type="ChEBI" id="CHEBI:30616"/>
        <dbReference type="ChEBI" id="CHEBI:33019"/>
        <dbReference type="ChEBI" id="CHEBI:57595"/>
        <dbReference type="ChEBI" id="CHEBI:78442"/>
        <dbReference type="ChEBI" id="CHEBI:78527"/>
        <dbReference type="ChEBI" id="CHEBI:456215"/>
        <dbReference type="EC" id="6.1.1.21"/>
    </reaction>
</comment>
<comment type="subunit">
    <text evidence="1">Homodimer.</text>
</comment>
<comment type="subcellular location">
    <subcellularLocation>
        <location evidence="1">Cytoplasm</location>
    </subcellularLocation>
</comment>
<comment type="similarity">
    <text evidence="1">Belongs to the class-II aminoacyl-tRNA synthetase family.</text>
</comment>
<feature type="chain" id="PRO_1000199143" description="Histidine--tRNA ligase">
    <location>
        <begin position="1"/>
        <end position="406"/>
    </location>
</feature>
<accession>A6Q371</accession>
<name>SYH_NITSB</name>
<protein>
    <recommendedName>
        <fullName evidence="1">Histidine--tRNA ligase</fullName>
        <ecNumber evidence="1">6.1.1.21</ecNumber>
    </recommendedName>
    <alternativeName>
        <fullName evidence="1">Histidyl-tRNA synthetase</fullName>
        <shortName evidence="1">HisRS</shortName>
    </alternativeName>
</protein>
<evidence type="ECO:0000255" key="1">
    <source>
        <dbReference type="HAMAP-Rule" id="MF_00127"/>
    </source>
</evidence>
<keyword id="KW-0030">Aminoacyl-tRNA synthetase</keyword>
<keyword id="KW-0067">ATP-binding</keyword>
<keyword id="KW-0963">Cytoplasm</keyword>
<keyword id="KW-0436">Ligase</keyword>
<keyword id="KW-0547">Nucleotide-binding</keyword>
<keyword id="KW-0648">Protein biosynthesis</keyword>
<keyword id="KW-1185">Reference proteome</keyword>